<dbReference type="EMBL" id="AE016823">
    <property type="protein sequence ID" value="AAS71128.1"/>
    <property type="molecule type" value="Genomic_DNA"/>
</dbReference>
<dbReference type="RefSeq" id="WP_001075198.1">
    <property type="nucleotide sequence ID" value="NC_005823.1"/>
</dbReference>
<dbReference type="SMR" id="P62359"/>
<dbReference type="KEGG" id="lic:LIC_12564"/>
<dbReference type="HOGENOM" id="CLU_025113_0_2_12"/>
<dbReference type="UniPathway" id="UPA00031">
    <property type="reaction ID" value="UER00006"/>
</dbReference>
<dbReference type="Proteomes" id="UP000007037">
    <property type="component" value="Chromosome I"/>
</dbReference>
<dbReference type="GO" id="GO:0005737">
    <property type="term" value="C:cytoplasm"/>
    <property type="evidence" value="ECO:0007669"/>
    <property type="project" value="UniProtKB-SubCell"/>
</dbReference>
<dbReference type="GO" id="GO:0000105">
    <property type="term" value="P:L-histidine biosynthetic process"/>
    <property type="evidence" value="ECO:0007669"/>
    <property type="project" value="UniProtKB-UniPathway"/>
</dbReference>
<dbReference type="Gene3D" id="3.30.930.10">
    <property type="entry name" value="Bira Bifunctional Protein, Domain 2"/>
    <property type="match status" value="1"/>
</dbReference>
<dbReference type="InterPro" id="IPR045864">
    <property type="entry name" value="aa-tRNA-synth_II/BPL/LPL"/>
</dbReference>
<dbReference type="InterPro" id="IPR041715">
    <property type="entry name" value="HisRS-like_core"/>
</dbReference>
<dbReference type="InterPro" id="IPR004516">
    <property type="entry name" value="HisRS/HisZ"/>
</dbReference>
<dbReference type="NCBIfam" id="NF008944">
    <property type="entry name" value="PRK12292.3-2"/>
    <property type="match status" value="1"/>
</dbReference>
<dbReference type="PANTHER" id="PTHR11476:SF7">
    <property type="entry name" value="HISTIDINE--TRNA LIGASE"/>
    <property type="match status" value="1"/>
</dbReference>
<dbReference type="PANTHER" id="PTHR11476">
    <property type="entry name" value="HISTIDYL-TRNA SYNTHETASE"/>
    <property type="match status" value="1"/>
</dbReference>
<dbReference type="Pfam" id="PF13393">
    <property type="entry name" value="tRNA-synt_His"/>
    <property type="match status" value="1"/>
</dbReference>
<dbReference type="PIRSF" id="PIRSF001549">
    <property type="entry name" value="His-tRNA_synth"/>
    <property type="match status" value="1"/>
</dbReference>
<dbReference type="SUPFAM" id="SSF55681">
    <property type="entry name" value="Class II aaRS and biotin synthetases"/>
    <property type="match status" value="1"/>
</dbReference>
<feature type="chain" id="PRO_0000171040" description="ATP phosphoribosyltransferase regulatory subunit">
    <location>
        <begin position="1"/>
        <end position="344"/>
    </location>
</feature>
<reference key="1">
    <citation type="journal article" date="2004" name="J. Bacteriol.">
        <title>Comparative genomics of two Leptospira interrogans serovars reveals novel insights into physiology and pathogenesis.</title>
        <authorList>
            <person name="Nascimento A.L.T.O."/>
            <person name="Ko A.I."/>
            <person name="Martins E.A.L."/>
            <person name="Monteiro-Vitorello C.B."/>
            <person name="Ho P.L."/>
            <person name="Haake D.A."/>
            <person name="Verjovski-Almeida S."/>
            <person name="Hartskeerl R.A."/>
            <person name="Marques M.V."/>
            <person name="Oliveira M.C."/>
            <person name="Menck C.F.M."/>
            <person name="Leite L.C.C."/>
            <person name="Carrer H."/>
            <person name="Coutinho L.L."/>
            <person name="Degrave W.M."/>
            <person name="Dellagostin O.A."/>
            <person name="El-Dorry H."/>
            <person name="Ferro E.S."/>
            <person name="Ferro M.I.T."/>
            <person name="Furlan L.R."/>
            <person name="Gamberini M."/>
            <person name="Giglioti E.A."/>
            <person name="Goes-Neto A."/>
            <person name="Goldman G.H."/>
            <person name="Goldman M.H.S."/>
            <person name="Harakava R."/>
            <person name="Jeronimo S.M.B."/>
            <person name="Junqueira-de-Azevedo I.L.M."/>
            <person name="Kimura E.T."/>
            <person name="Kuramae E.E."/>
            <person name="Lemos E.G.M."/>
            <person name="Lemos M.V.F."/>
            <person name="Marino C.L."/>
            <person name="Nunes L.R."/>
            <person name="de Oliveira R.C."/>
            <person name="Pereira G.G."/>
            <person name="Reis M.S."/>
            <person name="Schriefer A."/>
            <person name="Siqueira W.J."/>
            <person name="Sommer P."/>
            <person name="Tsai S.M."/>
            <person name="Simpson A.J.G."/>
            <person name="Ferro J.A."/>
            <person name="Camargo L.E.A."/>
            <person name="Kitajima J.P."/>
            <person name="Setubal J.C."/>
            <person name="Van Sluys M.A."/>
        </authorList>
    </citation>
    <scope>NUCLEOTIDE SEQUENCE [LARGE SCALE GENOMIC DNA]</scope>
    <source>
        <strain>Fiocruz L1-130</strain>
    </source>
</reference>
<protein>
    <recommendedName>
        <fullName>ATP phosphoribosyltransferase regulatory subunit</fullName>
    </recommendedName>
</protein>
<sequence length="344" mass="39114">MNQNLPEPNQKKWIPDGFHFLGPEDSKYRRTLLETISGVLKKKGYSEVFLPAFDYSSTFIQTVSAPDSSSLFRIRDLSGNEISPSIDLTVQAVKGMAGFSHQRENQNIFYIGRVFRESTKGSVARKEILQIGAESIGVSGKENTFKILEELDEIISLLPLENKLTLVLGNVNLFQSIVQEFELKQNEIEILSKLLYQKNVNEIQKIFGEKKNHTDLIRLLSSLVLNFDLNSLKNSLNINSLSKNLQKSLSSILEETYWIFNSWESKKRRIDLCIDFSLLRDLNYYTGFVFQGYLQDSPDPVLTGGTYDHLYEMFSGVQKNASGYALMVNTLESSLKTPLFNLSS</sequence>
<proteinExistence type="inferred from homology"/>
<comment type="function">
    <text evidence="1">Required for the first step of histidine biosynthesis. May allow the feedback regulation of ATP phosphoribosyltransferase activity by histidine (By similarity).</text>
</comment>
<comment type="pathway">
    <text>Amino-acid biosynthesis; L-histidine biosynthesis; L-histidine from 5-phospho-alpha-D-ribose 1-diphosphate: step 1/9.</text>
</comment>
<comment type="subunit">
    <text evidence="1">Heteromultimer composed of HisG and HisZ subunits.</text>
</comment>
<comment type="subcellular location">
    <subcellularLocation>
        <location evidence="1">Cytoplasm</location>
    </subcellularLocation>
</comment>
<comment type="miscellaneous">
    <text>This function is generally fulfilled by the C-terminal part of HisG, which is missing in some bacteria such as this one.</text>
</comment>
<comment type="similarity">
    <text evidence="2">Belongs to the class-II aminoacyl-tRNA synthetase family. HisZ subfamily.</text>
</comment>
<gene>
    <name type="primary">hisZ</name>
    <name type="ordered locus">LIC_12564</name>
</gene>
<evidence type="ECO:0000250" key="1"/>
<evidence type="ECO:0000305" key="2"/>
<name>HISZ_LEPIC</name>
<accession>P62359</accession>
<keyword id="KW-0028">Amino-acid biosynthesis</keyword>
<keyword id="KW-0963">Cytoplasm</keyword>
<keyword id="KW-0368">Histidine biosynthesis</keyword>
<organism>
    <name type="scientific">Leptospira interrogans serogroup Icterohaemorrhagiae serovar copenhageni (strain Fiocruz L1-130)</name>
    <dbReference type="NCBI Taxonomy" id="267671"/>
    <lineage>
        <taxon>Bacteria</taxon>
        <taxon>Pseudomonadati</taxon>
        <taxon>Spirochaetota</taxon>
        <taxon>Spirochaetia</taxon>
        <taxon>Leptospirales</taxon>
        <taxon>Leptospiraceae</taxon>
        <taxon>Leptospira</taxon>
    </lineage>
</organism>